<protein>
    <recommendedName>
        <fullName evidence="1">UDP-N-acetylglucosamine 1-carboxyvinyltransferase</fullName>
        <ecNumber evidence="1">2.5.1.7</ecNumber>
    </recommendedName>
    <alternativeName>
        <fullName evidence="1">Enoylpyruvate transferase</fullName>
    </alternativeName>
    <alternativeName>
        <fullName evidence="1">UDP-N-acetylglucosamine enolpyruvyl transferase</fullName>
        <shortName evidence="1">EPT</shortName>
    </alternativeName>
</protein>
<comment type="function">
    <text evidence="1">Cell wall formation. Adds enolpyruvyl to UDP-N-acetylglucosamine.</text>
</comment>
<comment type="catalytic activity">
    <reaction evidence="1">
        <text>phosphoenolpyruvate + UDP-N-acetyl-alpha-D-glucosamine = UDP-N-acetyl-3-O-(1-carboxyvinyl)-alpha-D-glucosamine + phosphate</text>
        <dbReference type="Rhea" id="RHEA:18681"/>
        <dbReference type="ChEBI" id="CHEBI:43474"/>
        <dbReference type="ChEBI" id="CHEBI:57705"/>
        <dbReference type="ChEBI" id="CHEBI:58702"/>
        <dbReference type="ChEBI" id="CHEBI:68483"/>
        <dbReference type="EC" id="2.5.1.7"/>
    </reaction>
</comment>
<comment type="pathway">
    <text evidence="1">Cell wall biogenesis; peptidoglycan biosynthesis.</text>
</comment>
<comment type="subcellular location">
    <subcellularLocation>
        <location evidence="1">Cytoplasm</location>
    </subcellularLocation>
</comment>
<comment type="similarity">
    <text evidence="1">Belongs to the EPSP synthase family. MurA subfamily.</text>
</comment>
<name>MURA_HYDCU</name>
<organism>
    <name type="scientific">Hydrogenovibrio crunogenus (strain DSM 25203 / XCL-2)</name>
    <name type="common">Thiomicrospira crunogena</name>
    <dbReference type="NCBI Taxonomy" id="317025"/>
    <lineage>
        <taxon>Bacteria</taxon>
        <taxon>Pseudomonadati</taxon>
        <taxon>Pseudomonadota</taxon>
        <taxon>Gammaproteobacteria</taxon>
        <taxon>Thiotrichales</taxon>
        <taxon>Piscirickettsiaceae</taxon>
        <taxon>Hydrogenovibrio</taxon>
    </lineage>
</organism>
<feature type="chain" id="PRO_0000231294" description="UDP-N-acetylglucosamine 1-carboxyvinyltransferase">
    <location>
        <begin position="1"/>
        <end position="418"/>
    </location>
</feature>
<feature type="active site" description="Proton donor" evidence="1">
    <location>
        <position position="117"/>
    </location>
</feature>
<feature type="binding site" evidence="1">
    <location>
        <begin position="22"/>
        <end position="23"/>
    </location>
    <ligand>
        <name>phosphoenolpyruvate</name>
        <dbReference type="ChEBI" id="CHEBI:58702"/>
    </ligand>
</feature>
<feature type="binding site" evidence="1">
    <location>
        <position position="93"/>
    </location>
    <ligand>
        <name>UDP-N-acetyl-alpha-D-glucosamine</name>
        <dbReference type="ChEBI" id="CHEBI:57705"/>
    </ligand>
</feature>
<feature type="binding site" evidence="1">
    <location>
        <position position="306"/>
    </location>
    <ligand>
        <name>UDP-N-acetyl-alpha-D-glucosamine</name>
        <dbReference type="ChEBI" id="CHEBI:57705"/>
    </ligand>
</feature>
<feature type="binding site" evidence="1">
    <location>
        <position position="328"/>
    </location>
    <ligand>
        <name>UDP-N-acetyl-alpha-D-glucosamine</name>
        <dbReference type="ChEBI" id="CHEBI:57705"/>
    </ligand>
</feature>
<feature type="modified residue" description="2-(S-cysteinyl)pyruvic acid O-phosphothioketal" evidence="1">
    <location>
        <position position="117"/>
    </location>
</feature>
<sequence>MDKLVIEGPCQLEGSVQISGAKNAALPILMGCLLSETPVVLSNVPHLKDVTTTIQLLATMGVEVMFDEELNIEIDASNITTKEAPYELVKTMRASILTMGPLLARFGEAKVSLPGGCAIGSRPVNIHIEGMQKMGAEIKVEQGYIIATADRLVGADITMEPVTVTGTENLLMAAVLAEGRTTLRNAAKEPEVSDLAHFLNKMGAKITGIDTDTLVIEGVEKLTGVSYRVIPDRIEAGTYLAAAALTKSCVTVKDVVPEHLTAVLDKFTEAGALVTTTDNTITLDMRNRSLKPVNIVTDPYPAFPTDMQAQFVVMNCLAEGEANVEETIFENRFMHVSELVRMGADIHVEGNVAHTKGVDHLIGAPVMATDLRASASLILAGLVAKGETVVSRIYHIDRGYELIEEKFHKLGAHIYRAN</sequence>
<proteinExistence type="inferred from homology"/>
<dbReference type="EC" id="2.5.1.7" evidence="1"/>
<dbReference type="EMBL" id="CP000109">
    <property type="protein sequence ID" value="ABB41582.1"/>
    <property type="molecule type" value="Genomic_DNA"/>
</dbReference>
<dbReference type="SMR" id="Q31GZ1"/>
<dbReference type="STRING" id="317025.Tcr_0987"/>
<dbReference type="KEGG" id="tcx:Tcr_0987"/>
<dbReference type="eggNOG" id="COG0766">
    <property type="taxonomic scope" value="Bacteria"/>
</dbReference>
<dbReference type="HOGENOM" id="CLU_027387_0_0_6"/>
<dbReference type="OrthoDB" id="9803760at2"/>
<dbReference type="UniPathway" id="UPA00219"/>
<dbReference type="GO" id="GO:0005737">
    <property type="term" value="C:cytoplasm"/>
    <property type="evidence" value="ECO:0007669"/>
    <property type="project" value="UniProtKB-SubCell"/>
</dbReference>
<dbReference type="GO" id="GO:0008760">
    <property type="term" value="F:UDP-N-acetylglucosamine 1-carboxyvinyltransferase activity"/>
    <property type="evidence" value="ECO:0007669"/>
    <property type="project" value="UniProtKB-UniRule"/>
</dbReference>
<dbReference type="GO" id="GO:0051301">
    <property type="term" value="P:cell division"/>
    <property type="evidence" value="ECO:0007669"/>
    <property type="project" value="UniProtKB-KW"/>
</dbReference>
<dbReference type="GO" id="GO:0071555">
    <property type="term" value="P:cell wall organization"/>
    <property type="evidence" value="ECO:0007669"/>
    <property type="project" value="UniProtKB-KW"/>
</dbReference>
<dbReference type="GO" id="GO:0009252">
    <property type="term" value="P:peptidoglycan biosynthetic process"/>
    <property type="evidence" value="ECO:0007669"/>
    <property type="project" value="UniProtKB-UniRule"/>
</dbReference>
<dbReference type="GO" id="GO:0008360">
    <property type="term" value="P:regulation of cell shape"/>
    <property type="evidence" value="ECO:0007669"/>
    <property type="project" value="UniProtKB-KW"/>
</dbReference>
<dbReference type="GO" id="GO:0019277">
    <property type="term" value="P:UDP-N-acetylgalactosamine biosynthetic process"/>
    <property type="evidence" value="ECO:0007669"/>
    <property type="project" value="InterPro"/>
</dbReference>
<dbReference type="CDD" id="cd01555">
    <property type="entry name" value="UdpNAET"/>
    <property type="match status" value="1"/>
</dbReference>
<dbReference type="FunFam" id="3.65.10.10:FF:000001">
    <property type="entry name" value="UDP-N-acetylglucosamine 1-carboxyvinyltransferase"/>
    <property type="match status" value="1"/>
</dbReference>
<dbReference type="Gene3D" id="3.65.10.10">
    <property type="entry name" value="Enolpyruvate transferase domain"/>
    <property type="match status" value="2"/>
</dbReference>
<dbReference type="HAMAP" id="MF_00111">
    <property type="entry name" value="MurA"/>
    <property type="match status" value="1"/>
</dbReference>
<dbReference type="InterPro" id="IPR001986">
    <property type="entry name" value="Enolpyruvate_Tfrase_dom"/>
</dbReference>
<dbReference type="InterPro" id="IPR036968">
    <property type="entry name" value="Enolpyruvate_Tfrase_sf"/>
</dbReference>
<dbReference type="InterPro" id="IPR050068">
    <property type="entry name" value="MurA_subfamily"/>
</dbReference>
<dbReference type="InterPro" id="IPR013792">
    <property type="entry name" value="RNA3'P_cycl/enolpyr_Trfase_a/b"/>
</dbReference>
<dbReference type="InterPro" id="IPR005750">
    <property type="entry name" value="UDP_GlcNAc_COvinyl_MurA"/>
</dbReference>
<dbReference type="NCBIfam" id="TIGR01072">
    <property type="entry name" value="murA"/>
    <property type="match status" value="1"/>
</dbReference>
<dbReference type="NCBIfam" id="NF006873">
    <property type="entry name" value="PRK09369.1"/>
    <property type="match status" value="1"/>
</dbReference>
<dbReference type="PANTHER" id="PTHR43783">
    <property type="entry name" value="UDP-N-ACETYLGLUCOSAMINE 1-CARBOXYVINYLTRANSFERASE"/>
    <property type="match status" value="1"/>
</dbReference>
<dbReference type="PANTHER" id="PTHR43783:SF1">
    <property type="entry name" value="UDP-N-ACETYLGLUCOSAMINE 1-CARBOXYVINYLTRANSFERASE"/>
    <property type="match status" value="1"/>
</dbReference>
<dbReference type="Pfam" id="PF00275">
    <property type="entry name" value="EPSP_synthase"/>
    <property type="match status" value="1"/>
</dbReference>
<dbReference type="SUPFAM" id="SSF55205">
    <property type="entry name" value="EPT/RTPC-like"/>
    <property type="match status" value="1"/>
</dbReference>
<keyword id="KW-0131">Cell cycle</keyword>
<keyword id="KW-0132">Cell division</keyword>
<keyword id="KW-0133">Cell shape</keyword>
<keyword id="KW-0961">Cell wall biogenesis/degradation</keyword>
<keyword id="KW-0963">Cytoplasm</keyword>
<keyword id="KW-0573">Peptidoglycan synthesis</keyword>
<keyword id="KW-0670">Pyruvate</keyword>
<keyword id="KW-0808">Transferase</keyword>
<gene>
    <name evidence="1" type="primary">murA</name>
    <name type="ordered locus">Tcr_0987</name>
</gene>
<accession>Q31GZ1</accession>
<evidence type="ECO:0000255" key="1">
    <source>
        <dbReference type="HAMAP-Rule" id="MF_00111"/>
    </source>
</evidence>
<reference key="1">
    <citation type="journal article" date="2006" name="PLoS Biol.">
        <title>The genome of deep-sea vent chemolithoautotroph Thiomicrospira crunogena XCL-2.</title>
        <authorList>
            <person name="Scott K.M."/>
            <person name="Sievert S.M."/>
            <person name="Abril F.N."/>
            <person name="Ball L.A."/>
            <person name="Barrett C.J."/>
            <person name="Blake R.A."/>
            <person name="Boller A.J."/>
            <person name="Chain P.S.G."/>
            <person name="Clark J.A."/>
            <person name="Davis C.R."/>
            <person name="Detter C."/>
            <person name="Do K.F."/>
            <person name="Dobrinski K.P."/>
            <person name="Faza B.I."/>
            <person name="Fitzpatrick K.A."/>
            <person name="Freyermuth S.K."/>
            <person name="Harmer T.L."/>
            <person name="Hauser L.J."/>
            <person name="Huegler M."/>
            <person name="Kerfeld C.A."/>
            <person name="Klotz M.G."/>
            <person name="Kong W.W."/>
            <person name="Land M."/>
            <person name="Lapidus A."/>
            <person name="Larimer F.W."/>
            <person name="Longo D.L."/>
            <person name="Lucas S."/>
            <person name="Malfatti S.A."/>
            <person name="Massey S.E."/>
            <person name="Martin D.D."/>
            <person name="McCuddin Z."/>
            <person name="Meyer F."/>
            <person name="Moore J.L."/>
            <person name="Ocampo L.H. Jr."/>
            <person name="Paul J.H."/>
            <person name="Paulsen I.T."/>
            <person name="Reep D.K."/>
            <person name="Ren Q."/>
            <person name="Ross R.L."/>
            <person name="Sato P.Y."/>
            <person name="Thomas P."/>
            <person name="Tinkham L.E."/>
            <person name="Zeruth G.T."/>
        </authorList>
    </citation>
    <scope>NUCLEOTIDE SEQUENCE [LARGE SCALE GENOMIC DNA]</scope>
    <source>
        <strain>DSM 25203 / XCL-2</strain>
    </source>
</reference>